<sequence>MNQSLLAPFGTAIERVEAGLNALRQGQGVLVVDDEDRENEGDLIFAAQTLTNTQMAMLIRECSGIVCLCLPDEKVKALELPPMVENNSSQYGTAFTVSIEAKVGVTTGVSAADRVTTIKAAIADGAKPSDLARPGHVYPLRAQPGGVLTRRGHTEGTIDLMQLAGLKPAGVLCEVTNPDGTMARLPEIIAFGAQHNIPVLTIEDIVLYRKSLLANVG</sequence>
<evidence type="ECO:0000255" key="1">
    <source>
        <dbReference type="HAMAP-Rule" id="MF_00180"/>
    </source>
</evidence>
<dbReference type="EC" id="4.1.99.12" evidence="1"/>
<dbReference type="EMBL" id="CP000681">
    <property type="protein sequence ID" value="ABP73870.1"/>
    <property type="molecule type" value="Genomic_DNA"/>
</dbReference>
<dbReference type="SMR" id="A4Y1N7"/>
<dbReference type="STRING" id="319224.Sputcn32_0134"/>
<dbReference type="KEGG" id="spc:Sputcn32_0134"/>
<dbReference type="eggNOG" id="COG0108">
    <property type="taxonomic scope" value="Bacteria"/>
</dbReference>
<dbReference type="HOGENOM" id="CLU_020273_3_0_6"/>
<dbReference type="UniPathway" id="UPA00275">
    <property type="reaction ID" value="UER00399"/>
</dbReference>
<dbReference type="GO" id="GO:0005829">
    <property type="term" value="C:cytosol"/>
    <property type="evidence" value="ECO:0007669"/>
    <property type="project" value="TreeGrafter"/>
</dbReference>
<dbReference type="GO" id="GO:0008686">
    <property type="term" value="F:3,4-dihydroxy-2-butanone-4-phosphate synthase activity"/>
    <property type="evidence" value="ECO:0007669"/>
    <property type="project" value="UniProtKB-UniRule"/>
</dbReference>
<dbReference type="GO" id="GO:0000287">
    <property type="term" value="F:magnesium ion binding"/>
    <property type="evidence" value="ECO:0007669"/>
    <property type="project" value="UniProtKB-UniRule"/>
</dbReference>
<dbReference type="GO" id="GO:0030145">
    <property type="term" value="F:manganese ion binding"/>
    <property type="evidence" value="ECO:0007669"/>
    <property type="project" value="UniProtKB-UniRule"/>
</dbReference>
<dbReference type="GO" id="GO:0009231">
    <property type="term" value="P:riboflavin biosynthetic process"/>
    <property type="evidence" value="ECO:0007669"/>
    <property type="project" value="UniProtKB-UniRule"/>
</dbReference>
<dbReference type="FunFam" id="3.90.870.10:FF:000002">
    <property type="entry name" value="3,4-dihydroxy-2-butanone 4-phosphate synthase"/>
    <property type="match status" value="1"/>
</dbReference>
<dbReference type="Gene3D" id="3.90.870.10">
    <property type="entry name" value="DHBP synthase"/>
    <property type="match status" value="1"/>
</dbReference>
<dbReference type="HAMAP" id="MF_00180">
    <property type="entry name" value="RibB"/>
    <property type="match status" value="1"/>
</dbReference>
<dbReference type="InterPro" id="IPR017945">
    <property type="entry name" value="DHBP_synth_RibB-like_a/b_dom"/>
</dbReference>
<dbReference type="InterPro" id="IPR000422">
    <property type="entry name" value="DHBP_synthase_RibB"/>
</dbReference>
<dbReference type="NCBIfam" id="TIGR00506">
    <property type="entry name" value="ribB"/>
    <property type="match status" value="1"/>
</dbReference>
<dbReference type="PANTHER" id="PTHR21327:SF38">
    <property type="entry name" value="3,4-DIHYDROXY-2-BUTANONE 4-PHOSPHATE SYNTHASE"/>
    <property type="match status" value="1"/>
</dbReference>
<dbReference type="PANTHER" id="PTHR21327">
    <property type="entry name" value="GTP CYCLOHYDROLASE II-RELATED"/>
    <property type="match status" value="1"/>
</dbReference>
<dbReference type="Pfam" id="PF00926">
    <property type="entry name" value="DHBP_synthase"/>
    <property type="match status" value="1"/>
</dbReference>
<dbReference type="SUPFAM" id="SSF55821">
    <property type="entry name" value="YrdC/RibB"/>
    <property type="match status" value="1"/>
</dbReference>
<feature type="chain" id="PRO_1000040629" description="3,4-dihydroxy-2-butanone 4-phosphate synthase">
    <location>
        <begin position="1"/>
        <end position="217"/>
    </location>
</feature>
<feature type="binding site" evidence="1">
    <location>
        <begin position="37"/>
        <end position="38"/>
    </location>
    <ligand>
        <name>D-ribulose 5-phosphate</name>
        <dbReference type="ChEBI" id="CHEBI:58121"/>
    </ligand>
</feature>
<feature type="binding site" evidence="1">
    <location>
        <position position="38"/>
    </location>
    <ligand>
        <name>Mg(2+)</name>
        <dbReference type="ChEBI" id="CHEBI:18420"/>
        <label>1</label>
    </ligand>
</feature>
<feature type="binding site" evidence="1">
    <location>
        <position position="38"/>
    </location>
    <ligand>
        <name>Mg(2+)</name>
        <dbReference type="ChEBI" id="CHEBI:18420"/>
        <label>2</label>
    </ligand>
</feature>
<feature type="binding site" evidence="1">
    <location>
        <position position="42"/>
    </location>
    <ligand>
        <name>D-ribulose 5-phosphate</name>
        <dbReference type="ChEBI" id="CHEBI:58121"/>
    </ligand>
</feature>
<feature type="binding site" evidence="1">
    <location>
        <begin position="150"/>
        <end position="154"/>
    </location>
    <ligand>
        <name>D-ribulose 5-phosphate</name>
        <dbReference type="ChEBI" id="CHEBI:58121"/>
    </ligand>
</feature>
<feature type="binding site" evidence="1">
    <location>
        <position position="153"/>
    </location>
    <ligand>
        <name>Mg(2+)</name>
        <dbReference type="ChEBI" id="CHEBI:18420"/>
        <label>2</label>
    </ligand>
</feature>
<feature type="binding site" evidence="1">
    <location>
        <position position="174"/>
    </location>
    <ligand>
        <name>D-ribulose 5-phosphate</name>
        <dbReference type="ChEBI" id="CHEBI:58121"/>
    </ligand>
</feature>
<feature type="site" description="Essential for catalytic activity" evidence="1">
    <location>
        <position position="136"/>
    </location>
</feature>
<feature type="site" description="Essential for catalytic activity" evidence="1">
    <location>
        <position position="174"/>
    </location>
</feature>
<reference key="1">
    <citation type="submission" date="2007-04" db="EMBL/GenBank/DDBJ databases">
        <title>Complete sequence of Shewanella putrefaciens CN-32.</title>
        <authorList>
            <consortium name="US DOE Joint Genome Institute"/>
            <person name="Copeland A."/>
            <person name="Lucas S."/>
            <person name="Lapidus A."/>
            <person name="Barry K."/>
            <person name="Detter J.C."/>
            <person name="Glavina del Rio T."/>
            <person name="Hammon N."/>
            <person name="Israni S."/>
            <person name="Dalin E."/>
            <person name="Tice H."/>
            <person name="Pitluck S."/>
            <person name="Chain P."/>
            <person name="Malfatti S."/>
            <person name="Shin M."/>
            <person name="Vergez L."/>
            <person name="Schmutz J."/>
            <person name="Larimer F."/>
            <person name="Land M."/>
            <person name="Hauser L."/>
            <person name="Kyrpides N."/>
            <person name="Mikhailova N."/>
            <person name="Romine M.F."/>
            <person name="Fredrickson J."/>
            <person name="Tiedje J."/>
            <person name="Richardson P."/>
        </authorList>
    </citation>
    <scope>NUCLEOTIDE SEQUENCE [LARGE SCALE GENOMIC DNA]</scope>
    <source>
        <strain>CN-32 / ATCC BAA-453</strain>
    </source>
</reference>
<name>RIBB_SHEPC</name>
<accession>A4Y1N7</accession>
<comment type="function">
    <text evidence="1">Catalyzes the conversion of D-ribulose 5-phosphate to formate and 3,4-dihydroxy-2-butanone 4-phosphate.</text>
</comment>
<comment type="catalytic activity">
    <reaction evidence="1">
        <text>D-ribulose 5-phosphate = (2S)-2-hydroxy-3-oxobutyl phosphate + formate + H(+)</text>
        <dbReference type="Rhea" id="RHEA:18457"/>
        <dbReference type="ChEBI" id="CHEBI:15378"/>
        <dbReference type="ChEBI" id="CHEBI:15740"/>
        <dbReference type="ChEBI" id="CHEBI:58121"/>
        <dbReference type="ChEBI" id="CHEBI:58830"/>
        <dbReference type="EC" id="4.1.99.12"/>
    </reaction>
</comment>
<comment type="cofactor">
    <cofactor evidence="1">
        <name>Mg(2+)</name>
        <dbReference type="ChEBI" id="CHEBI:18420"/>
    </cofactor>
    <cofactor evidence="1">
        <name>Mn(2+)</name>
        <dbReference type="ChEBI" id="CHEBI:29035"/>
    </cofactor>
    <text evidence="1">Binds 2 divalent metal cations per subunit. Magnesium or manganese.</text>
</comment>
<comment type="pathway">
    <text evidence="1">Cofactor biosynthesis; riboflavin biosynthesis; 2-hydroxy-3-oxobutyl phosphate from D-ribulose 5-phosphate: step 1/1.</text>
</comment>
<comment type="subunit">
    <text evidence="1">Homodimer.</text>
</comment>
<comment type="similarity">
    <text evidence="1">Belongs to the DHBP synthase family.</text>
</comment>
<proteinExistence type="inferred from homology"/>
<gene>
    <name evidence="1" type="primary">ribB</name>
    <name type="ordered locus">Sputcn32_0134</name>
</gene>
<keyword id="KW-0456">Lyase</keyword>
<keyword id="KW-0460">Magnesium</keyword>
<keyword id="KW-0464">Manganese</keyword>
<keyword id="KW-0479">Metal-binding</keyword>
<keyword id="KW-0686">Riboflavin biosynthesis</keyword>
<protein>
    <recommendedName>
        <fullName evidence="1">3,4-dihydroxy-2-butanone 4-phosphate synthase</fullName>
        <shortName evidence="1">DHBP synthase</shortName>
        <ecNumber evidence="1">4.1.99.12</ecNumber>
    </recommendedName>
</protein>
<organism>
    <name type="scientific">Shewanella putrefaciens (strain CN-32 / ATCC BAA-453)</name>
    <dbReference type="NCBI Taxonomy" id="319224"/>
    <lineage>
        <taxon>Bacteria</taxon>
        <taxon>Pseudomonadati</taxon>
        <taxon>Pseudomonadota</taxon>
        <taxon>Gammaproteobacteria</taxon>
        <taxon>Alteromonadales</taxon>
        <taxon>Shewanellaceae</taxon>
        <taxon>Shewanella</taxon>
    </lineage>
</organism>